<comment type="function">
    <text evidence="1">With SBE2, is involved in cell wall integrity and polarity processes like bud growth.</text>
</comment>
<comment type="subcellular location">
    <subcellularLocation>
        <location evidence="1">Cytoplasm</location>
    </subcellularLocation>
    <subcellularLocation>
        <location evidence="1">Golgi apparatus</location>
    </subcellularLocation>
</comment>
<comment type="similarity">
    <text evidence="3">Belongs to the SBE2 family.</text>
</comment>
<sequence>MTASVKEGAHSEVLDKRRVNTKLGQKITANSLSSDANSSMNSKRLGLGIARRPGDNLLASISDNYGGKYEVSGENMTELPQPRGLFIHRNDRPISDDSIVTKNSELFSSGFSDDNNSGASSVETDELSSEGGINLGLNNLTVGPIASDEHNMDGSFISDNFEESFISTDSVSTLHIPNENRNHDKSFSYENGPQSRAHKMISTNTTSSTINANNMKSTGTLPPFRPRSNSYSSKHLGTSTLYDHSNSTSAILPNKQHYLTPSQRYRMRKERNDTSLRNSIRKKERFYDEQEPNMELQEGDIDDSLIWNIPMASFSTNSFLMSSGDPKHVRSHQSKPQPRFPQRHNFGSVPHFQPPLMSSALDFKAMPTSPVPGIDSTSDLQFIRETTENLSSVYLQSSNRLSRSKLLERTDSAEVLPIEFKEASEKGMEDLILVSEDKLDVVSHSRPSWLPPKDPEEKKLHENQISKSMSIASFEQLDRNKESEERHIQDETNRQKYVLLLDRGVTRNSSIQSLKKMIWETPLTVDTRWSIYDQLLQSDVRLISEQYIESFEQIMQVLNKMEFPRNKETEIEKLIDNSIKNKISGKQNISNDLLLMLQLKSISHQGLIPGDELLFHHFLTDPSTNQSLQHVWELVNLIQLTCFNDFTKEKYDIKIVEPRGVVSKYLSQDDSFKSEFNTSCLNSTTWWNILERVDHNLFMWIMDIIVVANSQCFKNYPINREKFKNKSWEYYKSKKVIVEYKVLASFALNVLLNYHFGFNDLISITTLEDKSFCIPMPLDNLFDEGYINNVFIRKWLHYYKKF</sequence>
<gene>
    <name type="primary">SBE22</name>
    <name type="ORF">Kpol_530p6</name>
</gene>
<dbReference type="EMBL" id="DS480411">
    <property type="protein sequence ID" value="EDO17037.1"/>
    <property type="molecule type" value="Genomic_DNA"/>
</dbReference>
<dbReference type="RefSeq" id="XP_001644895.1">
    <property type="nucleotide sequence ID" value="XM_001644845.1"/>
</dbReference>
<dbReference type="SMR" id="A7TKY1"/>
<dbReference type="FunCoup" id="A7TKY1">
    <property type="interactions" value="29"/>
</dbReference>
<dbReference type="GeneID" id="5545227"/>
<dbReference type="KEGG" id="vpo:Kpol_530p6"/>
<dbReference type="eggNOG" id="ENOG502QR4N">
    <property type="taxonomic scope" value="Eukaryota"/>
</dbReference>
<dbReference type="HOGENOM" id="CLU_019068_0_0_1"/>
<dbReference type="InParanoid" id="A7TKY1"/>
<dbReference type="OMA" id="WWNILER"/>
<dbReference type="OrthoDB" id="289721at2759"/>
<dbReference type="PhylomeDB" id="A7TKY1"/>
<dbReference type="Proteomes" id="UP000000267">
    <property type="component" value="Unassembled WGS sequence"/>
</dbReference>
<dbReference type="GO" id="GO:0005794">
    <property type="term" value="C:Golgi apparatus"/>
    <property type="evidence" value="ECO:0007669"/>
    <property type="project" value="UniProtKB-SubCell"/>
</dbReference>
<dbReference type="GO" id="GO:0031505">
    <property type="term" value="P:fungal-type cell wall organization"/>
    <property type="evidence" value="ECO:0007669"/>
    <property type="project" value="EnsemblFungi"/>
</dbReference>
<dbReference type="GO" id="GO:0015031">
    <property type="term" value="P:protein transport"/>
    <property type="evidence" value="ECO:0007669"/>
    <property type="project" value="UniProtKB-KW"/>
</dbReference>
<dbReference type="InterPro" id="IPR031403">
    <property type="entry name" value="Sbe2/Sbe22_C"/>
</dbReference>
<dbReference type="InterPro" id="IPR053949">
    <property type="entry name" value="SBE2/SBE22_M"/>
</dbReference>
<dbReference type="InterPro" id="IPR053948">
    <property type="entry name" value="SBE2/SBE22_N"/>
</dbReference>
<dbReference type="Pfam" id="PF17076">
    <property type="entry name" value="SBE2_C"/>
    <property type="match status" value="1"/>
</dbReference>
<dbReference type="Pfam" id="PF22874">
    <property type="entry name" value="SBE2_M"/>
    <property type="match status" value="1"/>
</dbReference>
<dbReference type="Pfam" id="PF22876">
    <property type="entry name" value="SBE2_N"/>
    <property type="match status" value="1"/>
</dbReference>
<feature type="chain" id="PRO_0000320509" description="Protein SBE22">
    <location>
        <begin position="1"/>
        <end position="802"/>
    </location>
</feature>
<feature type="region of interest" description="Disordered" evidence="2">
    <location>
        <begin position="207"/>
        <end position="230"/>
    </location>
</feature>
<feature type="region of interest" description="Disordered" evidence="2">
    <location>
        <begin position="323"/>
        <end position="345"/>
    </location>
</feature>
<protein>
    <recommendedName>
        <fullName>Protein SBE22</fullName>
    </recommendedName>
</protein>
<reference key="1">
    <citation type="journal article" date="2007" name="Proc. Natl. Acad. Sci. U.S.A.">
        <title>Independent sorting-out of thousands of duplicated gene pairs in two yeast species descended from a whole-genome duplication.</title>
        <authorList>
            <person name="Scannell D.R."/>
            <person name="Frank A.C."/>
            <person name="Conant G.C."/>
            <person name="Byrne K.P."/>
            <person name="Woolfit M."/>
            <person name="Wolfe K.H."/>
        </authorList>
    </citation>
    <scope>NUCLEOTIDE SEQUENCE [LARGE SCALE GENOMIC DNA]</scope>
    <source>
        <strain>ATCC 22028 / DSM 70294 / BCRC 21397 / CBS 2163 / NBRC 10782 / NRRL Y-8283 / UCD 57-17</strain>
    </source>
</reference>
<accession>A7TKY1</accession>
<evidence type="ECO:0000250" key="1"/>
<evidence type="ECO:0000256" key="2">
    <source>
        <dbReference type="SAM" id="MobiDB-lite"/>
    </source>
</evidence>
<evidence type="ECO:0000305" key="3"/>
<organism>
    <name type="scientific">Vanderwaltozyma polyspora (strain ATCC 22028 / DSM 70294 / BCRC 21397 / CBS 2163 / NBRC 10782 / NRRL Y-8283 / UCD 57-17)</name>
    <name type="common">Kluyveromyces polysporus</name>
    <dbReference type="NCBI Taxonomy" id="436907"/>
    <lineage>
        <taxon>Eukaryota</taxon>
        <taxon>Fungi</taxon>
        <taxon>Dikarya</taxon>
        <taxon>Ascomycota</taxon>
        <taxon>Saccharomycotina</taxon>
        <taxon>Saccharomycetes</taxon>
        <taxon>Saccharomycetales</taxon>
        <taxon>Saccharomycetaceae</taxon>
        <taxon>Vanderwaltozyma</taxon>
    </lineage>
</organism>
<keyword id="KW-0961">Cell wall biogenesis/degradation</keyword>
<keyword id="KW-0963">Cytoplasm</keyword>
<keyword id="KW-0333">Golgi apparatus</keyword>
<keyword id="KW-0653">Protein transport</keyword>
<keyword id="KW-1185">Reference proteome</keyword>
<keyword id="KW-0813">Transport</keyword>
<name>SBE22_VANPO</name>
<proteinExistence type="inferred from homology"/>